<proteinExistence type="inferred from homology"/>
<dbReference type="EC" id="2.1.1.199" evidence="1"/>
<dbReference type="EMBL" id="CP001107">
    <property type="protein sequence ID" value="ACR74258.1"/>
    <property type="molecule type" value="Genomic_DNA"/>
</dbReference>
<dbReference type="RefSeq" id="WP_012741375.1">
    <property type="nucleotide sequence ID" value="NC_012781.1"/>
</dbReference>
<dbReference type="SMR" id="C4ZBW8"/>
<dbReference type="STRING" id="515619.EUBREC_0467"/>
<dbReference type="PaxDb" id="515619-EUBREC_0467"/>
<dbReference type="GeneID" id="86987377"/>
<dbReference type="KEGG" id="ere:EUBREC_0467"/>
<dbReference type="HOGENOM" id="CLU_038422_1_1_9"/>
<dbReference type="Proteomes" id="UP000001477">
    <property type="component" value="Chromosome"/>
</dbReference>
<dbReference type="GO" id="GO:0005737">
    <property type="term" value="C:cytoplasm"/>
    <property type="evidence" value="ECO:0007669"/>
    <property type="project" value="UniProtKB-SubCell"/>
</dbReference>
<dbReference type="GO" id="GO:0071424">
    <property type="term" value="F:rRNA (cytosine-N4-)-methyltransferase activity"/>
    <property type="evidence" value="ECO:0007669"/>
    <property type="project" value="UniProtKB-UniRule"/>
</dbReference>
<dbReference type="GO" id="GO:0070475">
    <property type="term" value="P:rRNA base methylation"/>
    <property type="evidence" value="ECO:0007669"/>
    <property type="project" value="UniProtKB-UniRule"/>
</dbReference>
<dbReference type="Gene3D" id="1.10.150.170">
    <property type="entry name" value="Putative methyltransferase TM0872, insert domain"/>
    <property type="match status" value="1"/>
</dbReference>
<dbReference type="Gene3D" id="3.40.50.150">
    <property type="entry name" value="Vaccinia Virus protein VP39"/>
    <property type="match status" value="1"/>
</dbReference>
<dbReference type="HAMAP" id="MF_01007">
    <property type="entry name" value="16SrRNA_methyltr_H"/>
    <property type="match status" value="1"/>
</dbReference>
<dbReference type="InterPro" id="IPR002903">
    <property type="entry name" value="RsmH"/>
</dbReference>
<dbReference type="InterPro" id="IPR023397">
    <property type="entry name" value="SAM-dep_MeTrfase_MraW_recog"/>
</dbReference>
<dbReference type="InterPro" id="IPR029063">
    <property type="entry name" value="SAM-dependent_MTases_sf"/>
</dbReference>
<dbReference type="NCBIfam" id="TIGR00006">
    <property type="entry name" value="16S rRNA (cytosine(1402)-N(4))-methyltransferase RsmH"/>
    <property type="match status" value="1"/>
</dbReference>
<dbReference type="PANTHER" id="PTHR11265:SF0">
    <property type="entry name" value="12S RRNA N4-METHYLCYTIDINE METHYLTRANSFERASE"/>
    <property type="match status" value="1"/>
</dbReference>
<dbReference type="PANTHER" id="PTHR11265">
    <property type="entry name" value="S-ADENOSYL-METHYLTRANSFERASE MRAW"/>
    <property type="match status" value="1"/>
</dbReference>
<dbReference type="Pfam" id="PF01795">
    <property type="entry name" value="Methyltransf_5"/>
    <property type="match status" value="1"/>
</dbReference>
<dbReference type="PIRSF" id="PIRSF004486">
    <property type="entry name" value="MraW"/>
    <property type="match status" value="1"/>
</dbReference>
<dbReference type="SUPFAM" id="SSF81799">
    <property type="entry name" value="Putative methyltransferase TM0872, insert domain"/>
    <property type="match status" value="1"/>
</dbReference>
<dbReference type="SUPFAM" id="SSF53335">
    <property type="entry name" value="S-adenosyl-L-methionine-dependent methyltransferases"/>
    <property type="match status" value="1"/>
</dbReference>
<protein>
    <recommendedName>
        <fullName evidence="1">Ribosomal RNA small subunit methyltransferase H 1</fullName>
        <ecNumber evidence="1">2.1.1.199</ecNumber>
    </recommendedName>
    <alternativeName>
        <fullName evidence="1">16S rRNA m(4)C1402 methyltransferase 1</fullName>
    </alternativeName>
    <alternativeName>
        <fullName evidence="1">rRNA (cytosine-N(4)-)-methyltransferase RsmH 1</fullName>
    </alternativeName>
</protein>
<keyword id="KW-0963">Cytoplasm</keyword>
<keyword id="KW-0489">Methyltransferase</keyword>
<keyword id="KW-0698">rRNA processing</keyword>
<keyword id="KW-0949">S-adenosyl-L-methionine</keyword>
<keyword id="KW-0808">Transferase</keyword>
<reference key="1">
    <citation type="journal article" date="2009" name="Proc. Natl. Acad. Sci. U.S.A.">
        <title>Characterizing a model human gut microbiota composed of members of its two dominant bacterial phyla.</title>
        <authorList>
            <person name="Mahowald M.A."/>
            <person name="Rey F.E."/>
            <person name="Seedorf H."/>
            <person name="Turnbaugh P.J."/>
            <person name="Fulton R.S."/>
            <person name="Wollam A."/>
            <person name="Shah N."/>
            <person name="Wang C."/>
            <person name="Magrini V."/>
            <person name="Wilson R.K."/>
            <person name="Cantarel B.L."/>
            <person name="Coutinho P.M."/>
            <person name="Henrissat B."/>
            <person name="Crock L.W."/>
            <person name="Russell A."/>
            <person name="Verberkmoes N.C."/>
            <person name="Hettich R.L."/>
            <person name="Gordon J.I."/>
        </authorList>
    </citation>
    <scope>NUCLEOTIDE SEQUENCE [LARGE SCALE GENOMIC DNA]</scope>
    <source>
        <strain>ATCC 33656 / DSM 3377 / JCM 17463 / KCTC 5835 / LMG 30912 / VPI 0990</strain>
    </source>
</reference>
<accession>C4ZBW8</accession>
<organism>
    <name type="scientific">Agathobacter rectalis (strain ATCC 33656 / DSM 3377 / JCM 17463 / KCTC 5835 / VPI 0990)</name>
    <name type="common">Eubacterium rectale</name>
    <dbReference type="NCBI Taxonomy" id="515619"/>
    <lineage>
        <taxon>Bacteria</taxon>
        <taxon>Bacillati</taxon>
        <taxon>Bacillota</taxon>
        <taxon>Clostridia</taxon>
        <taxon>Lachnospirales</taxon>
        <taxon>Lachnospiraceae</taxon>
        <taxon>Agathobacter</taxon>
    </lineage>
</organism>
<comment type="function">
    <text evidence="1">Specifically methylates the N4 position of cytidine in position 1402 (C1402) of 16S rRNA.</text>
</comment>
<comment type="catalytic activity">
    <reaction evidence="1">
        <text>cytidine(1402) in 16S rRNA + S-adenosyl-L-methionine = N(4)-methylcytidine(1402) in 16S rRNA + S-adenosyl-L-homocysteine + H(+)</text>
        <dbReference type="Rhea" id="RHEA:42928"/>
        <dbReference type="Rhea" id="RHEA-COMP:10286"/>
        <dbReference type="Rhea" id="RHEA-COMP:10287"/>
        <dbReference type="ChEBI" id="CHEBI:15378"/>
        <dbReference type="ChEBI" id="CHEBI:57856"/>
        <dbReference type="ChEBI" id="CHEBI:59789"/>
        <dbReference type="ChEBI" id="CHEBI:74506"/>
        <dbReference type="ChEBI" id="CHEBI:82748"/>
        <dbReference type="EC" id="2.1.1.199"/>
    </reaction>
</comment>
<comment type="subcellular location">
    <subcellularLocation>
        <location evidence="1">Cytoplasm</location>
    </subcellularLocation>
</comment>
<comment type="similarity">
    <text evidence="1">Belongs to the methyltransferase superfamily. RsmH family.</text>
</comment>
<name>RSMH1_AGARV</name>
<evidence type="ECO:0000255" key="1">
    <source>
        <dbReference type="HAMAP-Rule" id="MF_01007"/>
    </source>
</evidence>
<feature type="chain" id="PRO_0000386889" description="Ribosomal RNA small subunit methyltransferase H 1">
    <location>
        <begin position="1"/>
        <end position="349"/>
    </location>
</feature>
<feature type="binding site" evidence="1">
    <location>
        <begin position="79"/>
        <end position="81"/>
    </location>
    <ligand>
        <name>S-adenosyl-L-methionine</name>
        <dbReference type="ChEBI" id="CHEBI:59789"/>
    </ligand>
</feature>
<feature type="binding site" evidence="1">
    <location>
        <position position="99"/>
    </location>
    <ligand>
        <name>S-adenosyl-L-methionine</name>
        <dbReference type="ChEBI" id="CHEBI:59789"/>
    </ligand>
</feature>
<feature type="binding site" evidence="1">
    <location>
        <position position="129"/>
    </location>
    <ligand>
        <name>S-adenosyl-L-methionine</name>
        <dbReference type="ChEBI" id="CHEBI:59789"/>
    </ligand>
</feature>
<feature type="binding site" evidence="1">
    <location>
        <position position="148"/>
    </location>
    <ligand>
        <name>S-adenosyl-L-methionine</name>
        <dbReference type="ChEBI" id="CHEBI:59789"/>
    </ligand>
</feature>
<feature type="binding site" evidence="1">
    <location>
        <position position="155"/>
    </location>
    <ligand>
        <name>S-adenosyl-L-methionine</name>
        <dbReference type="ChEBI" id="CHEBI:59789"/>
    </ligand>
</feature>
<sequence length="349" mass="39427">MSEEKQHKRRVHYSGKYPKKFEEKYKELNPEKYKDTIEHVISKGNTPAGMHISIMVKEIIDFLDIKPGQTGFDATLGYGGHTRAMLEKLEGQGHMFATDVDPIESEKTKKRLAEAGFGEDILTIKLQNFCTIDEIAKEVGGFDFILADLGVSSMQIDNPERGFSFKVDGPLDLRLNPNAGISAAERLDNISREELSGMLYENSDEPYCEELAKAITDEIRKGNRIGTTTKLRHIIEQTLDFLPEKDKKDIIKKTCQRTFQALRIDVNHEFEVLYEFMEKLPGALKPGGRAAILTFHSGEDKLVKKALKAGYKAGIYSDYSKDVIRPSAQECAQNGRARSTKMRWAVRAE</sequence>
<gene>
    <name evidence="1" type="primary">rsmH1</name>
    <name type="synonym">mraW1</name>
    <name type="ordered locus">EUBREC_0467</name>
</gene>